<comment type="function">
    <text evidence="1">Endoribonuclease that initiates mRNA decay.</text>
</comment>
<comment type="subcellular location">
    <subcellularLocation>
        <location evidence="1">Cell membrane</location>
        <topology evidence="1">Single-pass membrane protein</topology>
    </subcellularLocation>
</comment>
<comment type="similarity">
    <text evidence="1">Belongs to the RNase Y family.</text>
</comment>
<reference key="1">
    <citation type="journal article" date="2003" name="Genome Res.">
        <title>Genome sequence of an M3 strain of Streptococcus pyogenes reveals a large-scale genomic rearrangement in invasive strains and new insights into phage evolution.</title>
        <authorList>
            <person name="Nakagawa I."/>
            <person name="Kurokawa K."/>
            <person name="Yamashita A."/>
            <person name="Nakata M."/>
            <person name="Tomiyasu Y."/>
            <person name="Okahashi N."/>
            <person name="Kawabata S."/>
            <person name="Yamazaki K."/>
            <person name="Shiba T."/>
            <person name="Yasunaga T."/>
            <person name="Hayashi H."/>
            <person name="Hattori M."/>
            <person name="Hamada S."/>
        </authorList>
    </citation>
    <scope>NUCLEOTIDE SEQUENCE [LARGE SCALE GENOMIC DNA]</scope>
    <source>
        <strain>SSI-1</strain>
    </source>
</reference>
<organism>
    <name type="scientific">Streptococcus pyogenes serotype M3 (strain SSI-1)</name>
    <dbReference type="NCBI Taxonomy" id="193567"/>
    <lineage>
        <taxon>Bacteria</taxon>
        <taxon>Bacillati</taxon>
        <taxon>Bacillota</taxon>
        <taxon>Bacilli</taxon>
        <taxon>Lactobacillales</taxon>
        <taxon>Streptococcaceae</taxon>
        <taxon>Streptococcus</taxon>
    </lineage>
</organism>
<gene>
    <name evidence="1" type="primary">rny</name>
    <name type="ordered locus">SPs0486</name>
</gene>
<feature type="chain" id="PRO_0000411550" description="Ribonuclease Y">
    <location>
        <begin position="1"/>
        <end position="535"/>
    </location>
</feature>
<feature type="transmembrane region" description="Helical" evidence="1">
    <location>
        <begin position="4"/>
        <end position="24"/>
    </location>
</feature>
<feature type="domain" description="KH" evidence="1">
    <location>
        <begin position="225"/>
        <end position="285"/>
    </location>
</feature>
<feature type="domain" description="HD" evidence="2">
    <location>
        <begin position="351"/>
        <end position="444"/>
    </location>
</feature>
<feature type="region of interest" description="Disordered" evidence="3">
    <location>
        <begin position="118"/>
        <end position="141"/>
    </location>
</feature>
<sequence>MVNIILLIVSALIGLILGYALISIRLKSAKEAAELTLLNAEQEAVDIRGKAEVDAEHIKKTAKRESKANRKELLLEAKEEARKYREEIEQEFKSERQELKQLETRLAERSLTLDRKDENLSSKEKVLDSKEQSLTDKSKHIDERQLQVEKLEEEKKAELEKVAAMTIAEAREVILMETENKLTHEIATRIRDAERDIKDRTVKTAKDLLAQAMQRLAGEYVTEQTITSVHLPDDNMKGRIIGREGRNIRTLESLTGIDVIIDDTPEVVILSGFDPIRREIARMTLESLIADGRIHPARIEELVEKNRLEMDNRIREYGEAAAYEIGAPNLHPDLIKIMGRLQFRTSFGQNVLRHSVEVGKLAGILAGELGENVALARRAGFLHDMGKAIDREVEGSHVEIGMEFARKYKEHPVVVNTIASHHGDVEPDSVIAVLVAAADALSSARPGARNESMENYIKRLRDLEEIATSFDGVQNSFALQAGREIRIMVQPEKISDDQVVILSHKVREKIENNLDYPGNIKVTVIREMRAVDYAK</sequence>
<accession>P0DF21</accession>
<accession>P67285</accession>
<accession>Q99YM4</accession>
<keyword id="KW-1003">Cell membrane</keyword>
<keyword id="KW-0255">Endonuclease</keyword>
<keyword id="KW-0378">Hydrolase</keyword>
<keyword id="KW-0472">Membrane</keyword>
<keyword id="KW-0540">Nuclease</keyword>
<keyword id="KW-0694">RNA-binding</keyword>
<keyword id="KW-0812">Transmembrane</keyword>
<keyword id="KW-1133">Transmembrane helix</keyword>
<dbReference type="EC" id="3.1.-.-" evidence="1"/>
<dbReference type="EMBL" id="BA000034">
    <property type="protein sequence ID" value="BAC63581.1"/>
    <property type="molecule type" value="Genomic_DNA"/>
</dbReference>
<dbReference type="RefSeq" id="WP_002988954.1">
    <property type="nucleotide sequence ID" value="NC_004606.1"/>
</dbReference>
<dbReference type="SMR" id="P0DF21"/>
<dbReference type="KEGG" id="sps:SPs0486"/>
<dbReference type="HOGENOM" id="CLU_028328_1_0_9"/>
<dbReference type="GO" id="GO:0005886">
    <property type="term" value="C:plasma membrane"/>
    <property type="evidence" value="ECO:0007669"/>
    <property type="project" value="UniProtKB-SubCell"/>
</dbReference>
<dbReference type="GO" id="GO:0003723">
    <property type="term" value="F:RNA binding"/>
    <property type="evidence" value="ECO:0007669"/>
    <property type="project" value="UniProtKB-UniRule"/>
</dbReference>
<dbReference type="GO" id="GO:0004521">
    <property type="term" value="F:RNA endonuclease activity"/>
    <property type="evidence" value="ECO:0007669"/>
    <property type="project" value="UniProtKB-UniRule"/>
</dbReference>
<dbReference type="GO" id="GO:0006402">
    <property type="term" value="P:mRNA catabolic process"/>
    <property type="evidence" value="ECO:0007669"/>
    <property type="project" value="UniProtKB-UniRule"/>
</dbReference>
<dbReference type="CDD" id="cd00077">
    <property type="entry name" value="HDc"/>
    <property type="match status" value="1"/>
</dbReference>
<dbReference type="CDD" id="cd22431">
    <property type="entry name" value="KH-I_RNaseY"/>
    <property type="match status" value="1"/>
</dbReference>
<dbReference type="FunFam" id="1.10.3210.10:FF:000003">
    <property type="entry name" value="Ribonuclease Y"/>
    <property type="match status" value="1"/>
</dbReference>
<dbReference type="Gene3D" id="1.10.3210.10">
    <property type="entry name" value="Hypothetical protein af1432"/>
    <property type="match status" value="1"/>
</dbReference>
<dbReference type="Gene3D" id="3.30.1370.10">
    <property type="entry name" value="K Homology domain, type 1"/>
    <property type="match status" value="1"/>
</dbReference>
<dbReference type="HAMAP" id="MF_00335">
    <property type="entry name" value="RNase_Y"/>
    <property type="match status" value="1"/>
</dbReference>
<dbReference type="InterPro" id="IPR003607">
    <property type="entry name" value="HD/PDEase_dom"/>
</dbReference>
<dbReference type="InterPro" id="IPR006674">
    <property type="entry name" value="HD_domain"/>
</dbReference>
<dbReference type="InterPro" id="IPR006675">
    <property type="entry name" value="HDIG_dom"/>
</dbReference>
<dbReference type="InterPro" id="IPR004087">
    <property type="entry name" value="KH_dom"/>
</dbReference>
<dbReference type="InterPro" id="IPR004088">
    <property type="entry name" value="KH_dom_type_1"/>
</dbReference>
<dbReference type="InterPro" id="IPR036612">
    <property type="entry name" value="KH_dom_type_1_sf"/>
</dbReference>
<dbReference type="InterPro" id="IPR017705">
    <property type="entry name" value="Ribonuclease_Y"/>
</dbReference>
<dbReference type="InterPro" id="IPR022711">
    <property type="entry name" value="RNase_Y_N"/>
</dbReference>
<dbReference type="NCBIfam" id="TIGR00277">
    <property type="entry name" value="HDIG"/>
    <property type="match status" value="1"/>
</dbReference>
<dbReference type="NCBIfam" id="NF000997">
    <property type="entry name" value="PRK00106.1"/>
    <property type="match status" value="1"/>
</dbReference>
<dbReference type="NCBIfam" id="TIGR03319">
    <property type="entry name" value="RNase_Y"/>
    <property type="match status" value="1"/>
</dbReference>
<dbReference type="PANTHER" id="PTHR12826">
    <property type="entry name" value="RIBONUCLEASE Y"/>
    <property type="match status" value="1"/>
</dbReference>
<dbReference type="PANTHER" id="PTHR12826:SF15">
    <property type="entry name" value="RIBONUCLEASE Y"/>
    <property type="match status" value="1"/>
</dbReference>
<dbReference type="Pfam" id="PF01966">
    <property type="entry name" value="HD"/>
    <property type="match status" value="1"/>
</dbReference>
<dbReference type="Pfam" id="PF00013">
    <property type="entry name" value="KH_1"/>
    <property type="match status" value="1"/>
</dbReference>
<dbReference type="Pfam" id="PF12072">
    <property type="entry name" value="RNase_Y_N"/>
    <property type="match status" value="1"/>
</dbReference>
<dbReference type="SMART" id="SM00471">
    <property type="entry name" value="HDc"/>
    <property type="match status" value="1"/>
</dbReference>
<dbReference type="SMART" id="SM00322">
    <property type="entry name" value="KH"/>
    <property type="match status" value="1"/>
</dbReference>
<dbReference type="SUPFAM" id="SSF54791">
    <property type="entry name" value="Eukaryotic type KH-domain (KH-domain type I)"/>
    <property type="match status" value="1"/>
</dbReference>
<dbReference type="SUPFAM" id="SSF109604">
    <property type="entry name" value="HD-domain/PDEase-like"/>
    <property type="match status" value="1"/>
</dbReference>
<dbReference type="PROSITE" id="PS51831">
    <property type="entry name" value="HD"/>
    <property type="match status" value="1"/>
</dbReference>
<dbReference type="PROSITE" id="PS50084">
    <property type="entry name" value="KH_TYPE_1"/>
    <property type="match status" value="1"/>
</dbReference>
<evidence type="ECO:0000255" key="1">
    <source>
        <dbReference type="HAMAP-Rule" id="MF_00335"/>
    </source>
</evidence>
<evidence type="ECO:0000255" key="2">
    <source>
        <dbReference type="PROSITE-ProRule" id="PRU01175"/>
    </source>
</evidence>
<evidence type="ECO:0000256" key="3">
    <source>
        <dbReference type="SAM" id="MobiDB-lite"/>
    </source>
</evidence>
<proteinExistence type="inferred from homology"/>
<name>RNY_STRPQ</name>
<protein>
    <recommendedName>
        <fullName evidence="1">Ribonuclease Y</fullName>
        <shortName evidence="1">RNase Y</shortName>
        <ecNumber evidence="1">3.1.-.-</ecNumber>
    </recommendedName>
</protein>